<sequence>MSKVLEAKQSAVEEIKTKLSASASTVIVDYRGLNVGEITELRKQLRDAGIEFKVYKNSLTRRAVEANGYEGLEGALTGPNAIAFSNEDVVAPAKILNDFAKDHEALEIKAGVIEGKVASLEEIKALATLPSREGLLSMLCNVLQAPVRGLAIATKAVADQKEGQEA</sequence>
<feature type="chain" id="PRO_1000195552" description="Large ribosomal subunit protein uL10">
    <location>
        <begin position="1"/>
        <end position="166"/>
    </location>
</feature>
<organism>
    <name type="scientific">Listeria monocytogenes serotype 4a (strain HCC23)</name>
    <dbReference type="NCBI Taxonomy" id="552536"/>
    <lineage>
        <taxon>Bacteria</taxon>
        <taxon>Bacillati</taxon>
        <taxon>Bacillota</taxon>
        <taxon>Bacilli</taxon>
        <taxon>Bacillales</taxon>
        <taxon>Listeriaceae</taxon>
        <taxon>Listeria</taxon>
    </lineage>
</organism>
<accession>B8DF05</accession>
<comment type="function">
    <text evidence="1">Forms part of the ribosomal stalk, playing a central role in the interaction of the ribosome with GTP-bound translation factors.</text>
</comment>
<comment type="subunit">
    <text evidence="1">Part of the ribosomal stalk of the 50S ribosomal subunit. The N-terminus interacts with L11 and the large rRNA to form the base of the stalk. The C-terminus forms an elongated spine to which L12 dimers bind in a sequential fashion forming a multimeric L10(L12)X complex.</text>
</comment>
<comment type="similarity">
    <text evidence="1">Belongs to the universal ribosomal protein uL10 family.</text>
</comment>
<reference key="1">
    <citation type="journal article" date="2011" name="J. Bacteriol.">
        <title>Genome sequence of lineage III Listeria monocytogenes strain HCC23.</title>
        <authorList>
            <person name="Steele C.L."/>
            <person name="Donaldson J.R."/>
            <person name="Paul D."/>
            <person name="Banes M.M."/>
            <person name="Arick T."/>
            <person name="Bridges S.M."/>
            <person name="Lawrence M.L."/>
        </authorList>
    </citation>
    <scope>NUCLEOTIDE SEQUENCE [LARGE SCALE GENOMIC DNA]</scope>
    <source>
        <strain>HCC23</strain>
    </source>
</reference>
<proteinExistence type="inferred from homology"/>
<keyword id="KW-0687">Ribonucleoprotein</keyword>
<keyword id="KW-0689">Ribosomal protein</keyword>
<keyword id="KW-0694">RNA-binding</keyword>
<keyword id="KW-0699">rRNA-binding</keyword>
<protein>
    <recommendedName>
        <fullName evidence="1">Large ribosomal subunit protein uL10</fullName>
    </recommendedName>
    <alternativeName>
        <fullName evidence="2">50S ribosomal protein L10</fullName>
    </alternativeName>
</protein>
<evidence type="ECO:0000255" key="1">
    <source>
        <dbReference type="HAMAP-Rule" id="MF_00362"/>
    </source>
</evidence>
<evidence type="ECO:0000305" key="2"/>
<dbReference type="EMBL" id="CP001175">
    <property type="protein sequence ID" value="ACK40727.1"/>
    <property type="molecule type" value="Genomic_DNA"/>
</dbReference>
<dbReference type="RefSeq" id="WP_003723030.1">
    <property type="nucleotide sequence ID" value="NC_011660.1"/>
</dbReference>
<dbReference type="SMR" id="B8DF05"/>
<dbReference type="GeneID" id="93238164"/>
<dbReference type="KEGG" id="lmh:LMHCC_2390"/>
<dbReference type="HOGENOM" id="CLU_092227_2_0_9"/>
<dbReference type="GO" id="GO:0015934">
    <property type="term" value="C:large ribosomal subunit"/>
    <property type="evidence" value="ECO:0007669"/>
    <property type="project" value="InterPro"/>
</dbReference>
<dbReference type="GO" id="GO:0070180">
    <property type="term" value="F:large ribosomal subunit rRNA binding"/>
    <property type="evidence" value="ECO:0007669"/>
    <property type="project" value="UniProtKB-UniRule"/>
</dbReference>
<dbReference type="GO" id="GO:0003735">
    <property type="term" value="F:structural constituent of ribosome"/>
    <property type="evidence" value="ECO:0007669"/>
    <property type="project" value="InterPro"/>
</dbReference>
<dbReference type="GO" id="GO:0006412">
    <property type="term" value="P:translation"/>
    <property type="evidence" value="ECO:0007669"/>
    <property type="project" value="UniProtKB-UniRule"/>
</dbReference>
<dbReference type="CDD" id="cd05797">
    <property type="entry name" value="Ribosomal_L10"/>
    <property type="match status" value="1"/>
</dbReference>
<dbReference type="FunFam" id="3.30.70.1730:FF:000001">
    <property type="entry name" value="50S ribosomal protein L10"/>
    <property type="match status" value="1"/>
</dbReference>
<dbReference type="Gene3D" id="3.30.70.1730">
    <property type="match status" value="1"/>
</dbReference>
<dbReference type="HAMAP" id="MF_00362">
    <property type="entry name" value="Ribosomal_uL10"/>
    <property type="match status" value="1"/>
</dbReference>
<dbReference type="InterPro" id="IPR001790">
    <property type="entry name" value="Ribosomal_uL10"/>
</dbReference>
<dbReference type="InterPro" id="IPR043141">
    <property type="entry name" value="Ribosomal_uL10-like_sf"/>
</dbReference>
<dbReference type="InterPro" id="IPR022973">
    <property type="entry name" value="Ribosomal_uL10_bac"/>
</dbReference>
<dbReference type="InterPro" id="IPR047865">
    <property type="entry name" value="Ribosomal_uL10_bac_type"/>
</dbReference>
<dbReference type="InterPro" id="IPR002363">
    <property type="entry name" value="Ribosomal_uL10_CS_bac"/>
</dbReference>
<dbReference type="NCBIfam" id="NF000955">
    <property type="entry name" value="PRK00099.1-1"/>
    <property type="match status" value="1"/>
</dbReference>
<dbReference type="PANTHER" id="PTHR11560">
    <property type="entry name" value="39S RIBOSOMAL PROTEIN L10, MITOCHONDRIAL"/>
    <property type="match status" value="1"/>
</dbReference>
<dbReference type="Pfam" id="PF00466">
    <property type="entry name" value="Ribosomal_L10"/>
    <property type="match status" value="1"/>
</dbReference>
<dbReference type="SUPFAM" id="SSF160369">
    <property type="entry name" value="Ribosomal protein L10-like"/>
    <property type="match status" value="1"/>
</dbReference>
<dbReference type="PROSITE" id="PS01109">
    <property type="entry name" value="RIBOSOMAL_L10"/>
    <property type="match status" value="1"/>
</dbReference>
<name>RL10_LISMH</name>
<gene>
    <name evidence="1" type="primary">rplJ</name>
    <name type="ordered locus">LMHCC_2390</name>
</gene>